<protein>
    <recommendedName>
        <fullName evidence="1">Thiamine-phosphate synthase</fullName>
        <shortName evidence="1">TP synthase</shortName>
        <shortName evidence="1">TPS</shortName>
        <ecNumber evidence="1">2.5.1.3</ecNumber>
    </recommendedName>
    <alternativeName>
        <fullName evidence="1">Thiamine-phosphate pyrophosphorylase</fullName>
        <shortName evidence="1">TMP pyrophosphorylase</shortName>
        <shortName evidence="1">TMP-PPase</shortName>
    </alternativeName>
</protein>
<organism>
    <name type="scientific">Bordetella bronchiseptica (strain ATCC BAA-588 / NCTC 13252 / RB50)</name>
    <name type="common">Alcaligenes bronchisepticus</name>
    <dbReference type="NCBI Taxonomy" id="257310"/>
    <lineage>
        <taxon>Bacteria</taxon>
        <taxon>Pseudomonadati</taxon>
        <taxon>Pseudomonadota</taxon>
        <taxon>Betaproteobacteria</taxon>
        <taxon>Burkholderiales</taxon>
        <taxon>Alcaligenaceae</taxon>
        <taxon>Bordetella</taxon>
    </lineage>
</organism>
<gene>
    <name evidence="1" type="primary">thiE</name>
    <name type="ordered locus">BB4408</name>
</gene>
<comment type="function">
    <text evidence="1">Condenses 4-methyl-5-(beta-hydroxyethyl)thiazole monophosphate (THZ-P) and 2-methyl-4-amino-5-hydroxymethyl pyrimidine pyrophosphate (HMP-PP) to form thiamine monophosphate (TMP).</text>
</comment>
<comment type="catalytic activity">
    <reaction evidence="1">
        <text>2-[(2R,5Z)-2-carboxy-4-methylthiazol-5(2H)-ylidene]ethyl phosphate + 4-amino-2-methyl-5-(diphosphooxymethyl)pyrimidine + 2 H(+) = thiamine phosphate + CO2 + diphosphate</text>
        <dbReference type="Rhea" id="RHEA:47844"/>
        <dbReference type="ChEBI" id="CHEBI:15378"/>
        <dbReference type="ChEBI" id="CHEBI:16526"/>
        <dbReference type="ChEBI" id="CHEBI:33019"/>
        <dbReference type="ChEBI" id="CHEBI:37575"/>
        <dbReference type="ChEBI" id="CHEBI:57841"/>
        <dbReference type="ChEBI" id="CHEBI:62899"/>
        <dbReference type="EC" id="2.5.1.3"/>
    </reaction>
</comment>
<comment type="catalytic activity">
    <reaction evidence="1">
        <text>2-(2-carboxy-4-methylthiazol-5-yl)ethyl phosphate + 4-amino-2-methyl-5-(diphosphooxymethyl)pyrimidine + 2 H(+) = thiamine phosphate + CO2 + diphosphate</text>
        <dbReference type="Rhea" id="RHEA:47848"/>
        <dbReference type="ChEBI" id="CHEBI:15378"/>
        <dbReference type="ChEBI" id="CHEBI:16526"/>
        <dbReference type="ChEBI" id="CHEBI:33019"/>
        <dbReference type="ChEBI" id="CHEBI:37575"/>
        <dbReference type="ChEBI" id="CHEBI:57841"/>
        <dbReference type="ChEBI" id="CHEBI:62890"/>
        <dbReference type="EC" id="2.5.1.3"/>
    </reaction>
</comment>
<comment type="catalytic activity">
    <reaction evidence="1">
        <text>4-methyl-5-(2-phosphooxyethyl)-thiazole + 4-amino-2-methyl-5-(diphosphooxymethyl)pyrimidine + H(+) = thiamine phosphate + diphosphate</text>
        <dbReference type="Rhea" id="RHEA:22328"/>
        <dbReference type="ChEBI" id="CHEBI:15378"/>
        <dbReference type="ChEBI" id="CHEBI:33019"/>
        <dbReference type="ChEBI" id="CHEBI:37575"/>
        <dbReference type="ChEBI" id="CHEBI:57841"/>
        <dbReference type="ChEBI" id="CHEBI:58296"/>
        <dbReference type="EC" id="2.5.1.3"/>
    </reaction>
</comment>
<comment type="cofactor">
    <cofactor evidence="1">
        <name>Mg(2+)</name>
        <dbReference type="ChEBI" id="CHEBI:18420"/>
    </cofactor>
    <text evidence="1">Binds 1 Mg(2+) ion per subunit.</text>
</comment>
<comment type="pathway">
    <text evidence="1">Cofactor biosynthesis; thiamine diphosphate biosynthesis; thiamine phosphate from 4-amino-2-methyl-5-diphosphomethylpyrimidine and 4-methyl-5-(2-phosphoethyl)-thiazole: step 1/1.</text>
</comment>
<comment type="similarity">
    <text evidence="1">Belongs to the thiamine-phosphate synthase family.</text>
</comment>
<sequence>MKTLRFPAGLYGITPEWDDTDRLLAAVRAAAAGGMTALQLRRKLADERLRAAQARALAPLCRELGVVFLVNDHWKLALDVGADGAHLGRDDADPATVRAQAGAGLLLGVSCYNDLRRADALLAAGADYVAFGTVFASPTKPEAVHAPLQTLTEARARLLACPAPRPAVVAIGGITPANVSQVAQAGADSAAVISGLFEAPDIQAAARACAAAFSVNP</sequence>
<proteinExistence type="inferred from homology"/>
<feature type="chain" id="PRO_0000156997" description="Thiamine-phosphate synthase">
    <location>
        <begin position="1"/>
        <end position="217"/>
    </location>
</feature>
<feature type="binding site" evidence="1">
    <location>
        <begin position="39"/>
        <end position="43"/>
    </location>
    <ligand>
        <name>4-amino-2-methyl-5-(diphosphooxymethyl)pyrimidine</name>
        <dbReference type="ChEBI" id="CHEBI:57841"/>
    </ligand>
</feature>
<feature type="binding site" evidence="1">
    <location>
        <position position="71"/>
    </location>
    <ligand>
        <name>4-amino-2-methyl-5-(diphosphooxymethyl)pyrimidine</name>
        <dbReference type="ChEBI" id="CHEBI:57841"/>
    </ligand>
</feature>
<feature type="binding site" evidence="1">
    <location>
        <position position="72"/>
    </location>
    <ligand>
        <name>Mg(2+)</name>
        <dbReference type="ChEBI" id="CHEBI:18420"/>
    </ligand>
</feature>
<feature type="binding site" evidence="1">
    <location>
        <position position="91"/>
    </location>
    <ligand>
        <name>Mg(2+)</name>
        <dbReference type="ChEBI" id="CHEBI:18420"/>
    </ligand>
</feature>
<feature type="binding site" evidence="1">
    <location>
        <position position="110"/>
    </location>
    <ligand>
        <name>4-amino-2-methyl-5-(diphosphooxymethyl)pyrimidine</name>
        <dbReference type="ChEBI" id="CHEBI:57841"/>
    </ligand>
</feature>
<feature type="binding site" evidence="1">
    <location>
        <begin position="137"/>
        <end position="139"/>
    </location>
    <ligand>
        <name>2-[(2R,5Z)-2-carboxy-4-methylthiazol-5(2H)-ylidene]ethyl phosphate</name>
        <dbReference type="ChEBI" id="CHEBI:62899"/>
    </ligand>
</feature>
<feature type="binding site" evidence="1">
    <location>
        <position position="140"/>
    </location>
    <ligand>
        <name>4-amino-2-methyl-5-(diphosphooxymethyl)pyrimidine</name>
        <dbReference type="ChEBI" id="CHEBI:57841"/>
    </ligand>
</feature>
<feature type="binding site" evidence="1">
    <location>
        <position position="173"/>
    </location>
    <ligand>
        <name>2-[(2R,5Z)-2-carboxy-4-methylthiazol-5(2H)-ylidene]ethyl phosphate</name>
        <dbReference type="ChEBI" id="CHEBI:62899"/>
    </ligand>
</feature>
<feature type="binding site" evidence="1">
    <location>
        <begin position="193"/>
        <end position="194"/>
    </location>
    <ligand>
        <name>2-[(2R,5Z)-2-carboxy-4-methylthiazol-5(2H)-ylidene]ethyl phosphate</name>
        <dbReference type="ChEBI" id="CHEBI:62899"/>
    </ligand>
</feature>
<accession>Q7WF72</accession>
<name>THIE_BORBR</name>
<evidence type="ECO:0000255" key="1">
    <source>
        <dbReference type="HAMAP-Rule" id="MF_00097"/>
    </source>
</evidence>
<dbReference type="EC" id="2.5.1.3" evidence="1"/>
<dbReference type="EMBL" id="BX640450">
    <property type="protein sequence ID" value="CAE34771.1"/>
    <property type="molecule type" value="Genomic_DNA"/>
</dbReference>
<dbReference type="RefSeq" id="WP_010927119.1">
    <property type="nucleotide sequence ID" value="NC_002927.3"/>
</dbReference>
<dbReference type="SMR" id="Q7WF72"/>
<dbReference type="KEGG" id="bbr:BB4408"/>
<dbReference type="eggNOG" id="COG0352">
    <property type="taxonomic scope" value="Bacteria"/>
</dbReference>
<dbReference type="HOGENOM" id="CLU_018272_3_1_4"/>
<dbReference type="UniPathway" id="UPA00060">
    <property type="reaction ID" value="UER00141"/>
</dbReference>
<dbReference type="Proteomes" id="UP000001027">
    <property type="component" value="Chromosome"/>
</dbReference>
<dbReference type="GO" id="GO:0005737">
    <property type="term" value="C:cytoplasm"/>
    <property type="evidence" value="ECO:0007669"/>
    <property type="project" value="TreeGrafter"/>
</dbReference>
<dbReference type="GO" id="GO:0000287">
    <property type="term" value="F:magnesium ion binding"/>
    <property type="evidence" value="ECO:0007669"/>
    <property type="project" value="UniProtKB-UniRule"/>
</dbReference>
<dbReference type="GO" id="GO:0004789">
    <property type="term" value="F:thiamine-phosphate diphosphorylase activity"/>
    <property type="evidence" value="ECO:0007669"/>
    <property type="project" value="UniProtKB-UniRule"/>
</dbReference>
<dbReference type="GO" id="GO:0009228">
    <property type="term" value="P:thiamine biosynthetic process"/>
    <property type="evidence" value="ECO:0007669"/>
    <property type="project" value="UniProtKB-KW"/>
</dbReference>
<dbReference type="GO" id="GO:0009229">
    <property type="term" value="P:thiamine diphosphate biosynthetic process"/>
    <property type="evidence" value="ECO:0007669"/>
    <property type="project" value="UniProtKB-UniRule"/>
</dbReference>
<dbReference type="CDD" id="cd00564">
    <property type="entry name" value="TMP_TenI"/>
    <property type="match status" value="1"/>
</dbReference>
<dbReference type="Gene3D" id="3.20.20.70">
    <property type="entry name" value="Aldolase class I"/>
    <property type="match status" value="1"/>
</dbReference>
<dbReference type="HAMAP" id="MF_00097">
    <property type="entry name" value="TMP_synthase"/>
    <property type="match status" value="1"/>
</dbReference>
<dbReference type="InterPro" id="IPR013785">
    <property type="entry name" value="Aldolase_TIM"/>
</dbReference>
<dbReference type="InterPro" id="IPR036206">
    <property type="entry name" value="ThiamineP_synth_sf"/>
</dbReference>
<dbReference type="InterPro" id="IPR022998">
    <property type="entry name" value="ThiamineP_synth_TenI"/>
</dbReference>
<dbReference type="InterPro" id="IPR034291">
    <property type="entry name" value="TMP_synthase"/>
</dbReference>
<dbReference type="NCBIfam" id="TIGR00693">
    <property type="entry name" value="thiE"/>
    <property type="match status" value="1"/>
</dbReference>
<dbReference type="PANTHER" id="PTHR20857">
    <property type="entry name" value="THIAMINE-PHOSPHATE PYROPHOSPHORYLASE"/>
    <property type="match status" value="1"/>
</dbReference>
<dbReference type="PANTHER" id="PTHR20857:SF15">
    <property type="entry name" value="THIAMINE-PHOSPHATE SYNTHASE"/>
    <property type="match status" value="1"/>
</dbReference>
<dbReference type="Pfam" id="PF02581">
    <property type="entry name" value="TMP-TENI"/>
    <property type="match status" value="1"/>
</dbReference>
<dbReference type="SUPFAM" id="SSF51391">
    <property type="entry name" value="Thiamin phosphate synthase"/>
    <property type="match status" value="1"/>
</dbReference>
<keyword id="KW-0460">Magnesium</keyword>
<keyword id="KW-0479">Metal-binding</keyword>
<keyword id="KW-0784">Thiamine biosynthesis</keyword>
<keyword id="KW-0808">Transferase</keyword>
<reference key="1">
    <citation type="journal article" date="2003" name="Nat. Genet.">
        <title>Comparative analysis of the genome sequences of Bordetella pertussis, Bordetella parapertussis and Bordetella bronchiseptica.</title>
        <authorList>
            <person name="Parkhill J."/>
            <person name="Sebaihia M."/>
            <person name="Preston A."/>
            <person name="Murphy L.D."/>
            <person name="Thomson N.R."/>
            <person name="Harris D.E."/>
            <person name="Holden M.T.G."/>
            <person name="Churcher C.M."/>
            <person name="Bentley S.D."/>
            <person name="Mungall K.L."/>
            <person name="Cerdeno-Tarraga A.-M."/>
            <person name="Temple L."/>
            <person name="James K.D."/>
            <person name="Harris B."/>
            <person name="Quail M.A."/>
            <person name="Achtman M."/>
            <person name="Atkin R."/>
            <person name="Baker S."/>
            <person name="Basham D."/>
            <person name="Bason N."/>
            <person name="Cherevach I."/>
            <person name="Chillingworth T."/>
            <person name="Collins M."/>
            <person name="Cronin A."/>
            <person name="Davis P."/>
            <person name="Doggett J."/>
            <person name="Feltwell T."/>
            <person name="Goble A."/>
            <person name="Hamlin N."/>
            <person name="Hauser H."/>
            <person name="Holroyd S."/>
            <person name="Jagels K."/>
            <person name="Leather S."/>
            <person name="Moule S."/>
            <person name="Norberczak H."/>
            <person name="O'Neil S."/>
            <person name="Ormond D."/>
            <person name="Price C."/>
            <person name="Rabbinowitsch E."/>
            <person name="Rutter S."/>
            <person name="Sanders M."/>
            <person name="Saunders D."/>
            <person name="Seeger K."/>
            <person name="Sharp S."/>
            <person name="Simmonds M."/>
            <person name="Skelton J."/>
            <person name="Squares R."/>
            <person name="Squares S."/>
            <person name="Stevens K."/>
            <person name="Unwin L."/>
            <person name="Whitehead S."/>
            <person name="Barrell B.G."/>
            <person name="Maskell D.J."/>
        </authorList>
    </citation>
    <scope>NUCLEOTIDE SEQUENCE [LARGE SCALE GENOMIC DNA]</scope>
    <source>
        <strain>ATCC BAA-588 / NCTC 13252 / RB50</strain>
    </source>
</reference>